<comment type="function">
    <text evidence="1">Converts GTP to 7,8-dihydro-D-neopterin 2',3'-cyclic phosphate, the first intermediate in the biosynthesis of coenzyme methanopterin.</text>
</comment>
<comment type="catalytic activity">
    <reaction evidence="1">
        <text>GTP + H2O = 7,8-dihydroneopterin 2',3'-cyclic phosphate + formate + diphosphate + H(+)</text>
        <dbReference type="Rhea" id="RHEA:25860"/>
        <dbReference type="ChEBI" id="CHEBI:15377"/>
        <dbReference type="ChEBI" id="CHEBI:15378"/>
        <dbReference type="ChEBI" id="CHEBI:15740"/>
        <dbReference type="ChEBI" id="CHEBI:33019"/>
        <dbReference type="ChEBI" id="CHEBI:37565"/>
        <dbReference type="ChEBI" id="CHEBI:58854"/>
        <dbReference type="EC" id="3.5.4.39"/>
    </reaction>
</comment>
<comment type="cofactor">
    <cofactor evidence="1">
        <name>Fe(2+)</name>
        <dbReference type="ChEBI" id="CHEBI:29033"/>
    </cofactor>
    <text evidence="1">Binds 1 Fe(2+) ion per subunit.</text>
</comment>
<comment type="pathway">
    <text evidence="1">Cofactor biosynthesis; 5,6,7,8-tetrahydromethanopterin biosynthesis.</text>
</comment>
<comment type="subunit">
    <text evidence="1">Homodimer.</text>
</comment>
<comment type="similarity">
    <text evidence="1">Belongs to the GTP cyclohydrolase IV family.</text>
</comment>
<proteinExistence type="inferred from homology"/>
<gene>
    <name evidence="1" type="primary">mptA</name>
    <name type="ordered locus">HQ_3317A</name>
</gene>
<accession>Q18F47</accession>
<feature type="chain" id="PRO_0000289534" description="GTP cyclohydrolase MptA">
    <location>
        <begin position="1"/>
        <end position="309"/>
    </location>
</feature>
<feature type="site" description="May be catalytically important" evidence="1">
    <location>
        <position position="157"/>
    </location>
</feature>
<organism>
    <name type="scientific">Haloquadratum walsbyi (strain DSM 16790 / HBSQ001)</name>
    <dbReference type="NCBI Taxonomy" id="362976"/>
    <lineage>
        <taxon>Archaea</taxon>
        <taxon>Methanobacteriati</taxon>
        <taxon>Methanobacteriota</taxon>
        <taxon>Stenosarchaea group</taxon>
        <taxon>Halobacteria</taxon>
        <taxon>Halobacteriales</taxon>
        <taxon>Haloferacaceae</taxon>
        <taxon>Haloquadratum</taxon>
    </lineage>
</organism>
<protein>
    <recommendedName>
        <fullName evidence="1">GTP cyclohydrolase MptA</fullName>
        <ecNumber evidence="1">3.5.4.39</ecNumber>
    </recommendedName>
    <alternativeName>
        <fullName evidence="1">GTP cyclohydrolase IV</fullName>
    </alternativeName>
</protein>
<name>MPTA_HALWD</name>
<dbReference type="EC" id="3.5.4.39" evidence="1"/>
<dbReference type="EMBL" id="AM180088">
    <property type="protein sequence ID" value="CAJ53414.1"/>
    <property type="molecule type" value="Genomic_DNA"/>
</dbReference>
<dbReference type="RefSeq" id="WP_011572516.1">
    <property type="nucleotide sequence ID" value="NC_008212.1"/>
</dbReference>
<dbReference type="SMR" id="Q18F47"/>
<dbReference type="STRING" id="362976.HQ_3317A"/>
<dbReference type="GeneID" id="4193410"/>
<dbReference type="KEGG" id="hwa:HQ_3317A"/>
<dbReference type="eggNOG" id="arCOG04301">
    <property type="taxonomic scope" value="Archaea"/>
</dbReference>
<dbReference type="HOGENOM" id="CLU_062816_1_0_2"/>
<dbReference type="UniPathway" id="UPA00065"/>
<dbReference type="Proteomes" id="UP000001975">
    <property type="component" value="Chromosome"/>
</dbReference>
<dbReference type="GO" id="GO:0003934">
    <property type="term" value="F:GTP cyclohydrolase I activity"/>
    <property type="evidence" value="ECO:0007669"/>
    <property type="project" value="InterPro"/>
</dbReference>
<dbReference type="GO" id="GO:0044682">
    <property type="term" value="F:GTP cyclohydrolase IV activity"/>
    <property type="evidence" value="ECO:0007669"/>
    <property type="project" value="UniProtKB-UniRule"/>
</dbReference>
<dbReference type="GO" id="GO:0005506">
    <property type="term" value="F:iron ion binding"/>
    <property type="evidence" value="ECO:0007669"/>
    <property type="project" value="UniProtKB-UniRule"/>
</dbReference>
<dbReference type="GO" id="GO:2001118">
    <property type="term" value="P:tetrahydromethanopterin biosynthetic process"/>
    <property type="evidence" value="ECO:0007669"/>
    <property type="project" value="UniProtKB-UniRule"/>
</dbReference>
<dbReference type="Gene3D" id="3.10.270.10">
    <property type="entry name" value="Urate Oxidase"/>
    <property type="match status" value="1"/>
</dbReference>
<dbReference type="HAMAP" id="MF_01527_A">
    <property type="entry name" value="GTP_cyclohydrol_A"/>
    <property type="match status" value="1"/>
</dbReference>
<dbReference type="InterPro" id="IPR003801">
    <property type="entry name" value="GTP_cyclohydrolase_FolE2/MptA"/>
</dbReference>
<dbReference type="InterPro" id="IPR022840">
    <property type="entry name" value="GTP_cyclohydrolase_MptA"/>
</dbReference>
<dbReference type="NCBIfam" id="TIGR00294">
    <property type="entry name" value="GTP cyclohydrolase MptA"/>
    <property type="match status" value="1"/>
</dbReference>
<dbReference type="PANTHER" id="PTHR36445">
    <property type="entry name" value="GTP CYCLOHYDROLASE MPTA"/>
    <property type="match status" value="1"/>
</dbReference>
<dbReference type="PANTHER" id="PTHR36445:SF1">
    <property type="entry name" value="GTP CYCLOHYDROLASE MPTA"/>
    <property type="match status" value="1"/>
</dbReference>
<dbReference type="Pfam" id="PF02649">
    <property type="entry name" value="GCHY-1"/>
    <property type="match status" value="1"/>
</dbReference>
<sequence>MSHQLPDIQASRPDVTVGLSQVGVTDVDKLVKIERDGETPLVLMAEFEVFVDLPSGRKGIDMSRNMQVIDETLEAAVSGSVSRVEDMCGDVAERLLEKHEYTTTATVEMTADLVMHEDTPASELPTQNTISILASATATDEGTREEIGAEVIGMTVCPCSQGMSASRARDVMHDLDIEDETIETFLEQVPQPGHSQRGHATLTVTADGSPDVDLIELADIARDAMSARIYNLAKRPDEDYMTYHAHADAKFVEDCVRSMAEQVVNSFEHLDDDAVVRMKQSNDESIHQHNAHAEREVTLEQLRAEVSAS</sequence>
<evidence type="ECO:0000255" key="1">
    <source>
        <dbReference type="HAMAP-Rule" id="MF_01527"/>
    </source>
</evidence>
<reference key="1">
    <citation type="journal article" date="2006" name="BMC Genomics">
        <title>The genome of the square archaeon Haloquadratum walsbyi: life at the limits of water activity.</title>
        <authorList>
            <person name="Bolhuis H."/>
            <person name="Palm P."/>
            <person name="Wende A."/>
            <person name="Falb M."/>
            <person name="Rampp M."/>
            <person name="Rodriguez-Valera F."/>
            <person name="Pfeiffer F."/>
            <person name="Oesterhelt D."/>
        </authorList>
    </citation>
    <scope>NUCLEOTIDE SEQUENCE [LARGE SCALE GENOMIC DNA]</scope>
    <source>
        <strain>DSM 16790 / HBSQ001</strain>
    </source>
</reference>
<keyword id="KW-0378">Hydrolase</keyword>
<keyword id="KW-0408">Iron</keyword>
<keyword id="KW-0479">Metal-binding</keyword>
<keyword id="KW-1185">Reference proteome</keyword>